<comment type="function">
    <text evidence="7 25 26">Plays a role in protein sorting and trafficking between the trans-Golgi network (TGN) and endosomes. Mediates the ARF-dependent recruitment of clathrin to the TGN and binds ubiquitinated proteins and membrane cargo molecules with a cytosolic acidic cluster-dileucine (DXXLL) motif (PubMed:10747088). Mediates export of the GPCR receptor ADRA2B to the cell surface (PubMed:27901063). Regulates retrograde transport of phosphorylated form of BACE1 from endosomes to the trans-Golgi network (PubMed:15615712).</text>
</comment>
<comment type="subunit">
    <text evidence="1 2 9 10 11 12 13 14 15 16 17 18 19 20 21 22 26 27 28">Monomer (Probable). Interacts with NECAP1, TSG101, UBC and AFTPH/aftiphilin. Interacts with CNST (By similarity). Interacts with GGA1 and GGA3 (PubMed:14638859). Binds to clathrin and activated ARFs, such as ARF1, ARF5 and ARF6 (PubMed:11301005, PubMed:11950392). Binds RABEP1 and RABGEF1 (PubMed:12505986). Interacts with the type-I membrane proteins LRP3, M6PR/CD-MPR, IGF2R/CI-MPR and BACE1 (PubMed:11387475, PubMed:11390366, PubMed:11886874, PubMed:14567678). Interacts (via N-terminal VHS domain) with SORL1/sorLA and SORT1 (via C-terminal cytosolic domain) (PubMed:11331584, PubMed:11390366, PubMed:11821067). Binds the accessory proteins CCDC91, P200, SYNRG, EPN4 and NECAP2 (PubMed:10814529, PubMed:12429846, PubMed:12808037, PubMed:14665628). Interacts with ADRA2B (PubMed:27901063). Interacts (via VHS domain) with PIK4B; the interaction is important for PIK4B location at the Golgi apparatus membrane (PubMed:28289207).</text>
</comment>
<comment type="interaction">
    <interactant intactId="EBI-447646">
        <id>Q9UJY4</id>
    </interactant>
    <interactant intactId="EBI-2433139">
        <id>P56817</id>
        <label>BACE1</label>
    </interactant>
    <organismsDiffer>false</organismsDiffer>
    <experiments>2</experiments>
</comment>
<comment type="interaction">
    <interactant intactId="EBI-447646">
        <id>Q9UJY4</id>
    </interactant>
    <interactant intactId="EBI-718700">
        <id>P35219</id>
        <label>CA8</label>
    </interactant>
    <organismsDiffer>false</organismsDiffer>
    <experiments>6</experiments>
</comment>
<comment type="interaction">
    <interactant intactId="EBI-447646">
        <id>Q9UJY4</id>
    </interactant>
    <interactant intactId="EBI-447141">
        <id>Q9UJY5</id>
        <label>GGA1</label>
    </interactant>
    <organismsDiffer>false</organismsDiffer>
    <experiments>8</experiments>
</comment>
<comment type="interaction">
    <interactant intactId="EBI-447646">
        <id>Q9UJY4</id>
    </interactant>
    <interactant intactId="EBI-447404">
        <id>Q9NZ52</id>
        <label>GGA3</label>
    </interactant>
    <organismsDiffer>false</organismsDiffer>
    <experiments>3</experiments>
</comment>
<comment type="interaction">
    <interactant intactId="EBI-447646">
        <id>Q9UJY4</id>
    </interactant>
    <interactant intactId="EBI-1104564">
        <id>Q9Y316</id>
        <label>MEMO1</label>
    </interactant>
    <organismsDiffer>false</organismsDiffer>
    <experiments>3</experiments>
</comment>
<comment type="interaction">
    <interactant intactId="EBI-447646">
        <id>Q9UJY4</id>
    </interactant>
    <interactant intactId="EBI-447043">
        <id>Q15276</id>
        <label>RABEP1</label>
    </interactant>
    <organismsDiffer>false</organismsDiffer>
    <experiments>8</experiments>
</comment>
<comment type="interaction">
    <interactant intactId="EBI-447646">
        <id>Q9UJY4</id>
    </interactant>
    <interactant intactId="EBI-743502">
        <id>Q8WWV3</id>
        <label>RTN4IP1</label>
    </interactant>
    <organismsDiffer>false</organismsDiffer>
    <experiments>3</experiments>
</comment>
<comment type="interaction">
    <interactant intactId="EBI-447646">
        <id>Q9UJY4</id>
    </interactant>
    <interactant intactId="EBI-1171329">
        <id>Q92673</id>
        <label>SORL1</label>
    </interactant>
    <organismsDiffer>false</organismsDiffer>
    <experiments>5</experiments>
</comment>
<comment type="interaction">
    <interactant intactId="EBI-447646">
        <id>Q9UJY4</id>
    </interactant>
    <interactant intactId="EBI-742688">
        <id>Q9NZD8</id>
        <label>SPG21</label>
    </interactant>
    <organismsDiffer>false</organismsDiffer>
    <experiments>4</experiments>
</comment>
<comment type="interaction">
    <interactant intactId="EBI-447646">
        <id>Q9UJY4</id>
    </interactant>
    <interactant intactId="EBI-21453893">
        <id>P19328</id>
        <label>Adra2b</label>
    </interactant>
    <organismsDiffer>true</organismsDiffer>
    <experiments>3</experiments>
</comment>
<comment type="subcellular location">
    <subcellularLocation>
        <location evidence="8 23 27">Golgi apparatus</location>
        <location evidence="8 23 27">trans-Golgi network membrane</location>
        <topology evidence="8 23">Peripheral membrane protein</topology>
    </subcellularLocation>
    <subcellularLocation>
        <location evidence="23">Endosome membrane</location>
        <topology evidence="23">Peripheral membrane protein</topology>
    </subcellularLocation>
    <subcellularLocation>
        <location evidence="16">Early endosome membrane</location>
        <topology evidence="28">Peripheral membrane protein</topology>
    </subcellularLocation>
</comment>
<comment type="tissue specificity">
    <text>Ubiquitously expressed.</text>
</comment>
<comment type="domain">
    <text evidence="7">The VHS domain functions as a recognition module for sorting signals composed of an acidic cluster followed by two leucines (DXXLL motif).</text>
</comment>
<comment type="domain">
    <text>The GAT domain is responsible for interaction with ARF-GTP, UBC and RABEP1. Required for recruitment to the TGN it prevents ARF-GTP hydrolysis.</text>
</comment>
<comment type="domain">
    <text evidence="10">The unstructured hinge region contains clathrin-binding but no autoinhibitory (DXXLL) motifs.</text>
</comment>
<comment type="domain">
    <text>The GAE domain binds accessory proteins regulating GGAs function.</text>
</comment>
<comment type="PTM">
    <text evidence="1">Ubiquitinated.</text>
</comment>
<comment type="similarity">
    <text evidence="28">Belongs to the GGA protein family.</text>
</comment>
<comment type="sequence caution" evidence="28">
    <conflict type="frameshift">
        <sequence resource="EMBL-CDS" id="AAK38634"/>
    </conflict>
</comment>
<feature type="chain" id="PRO_0000212682" description="ADP-ribosylation factor-binding protein GGA2">
    <location>
        <begin position="1"/>
        <end position="613"/>
    </location>
</feature>
<feature type="domain" description="VHS" evidence="4">
    <location>
        <begin position="33"/>
        <end position="163"/>
    </location>
</feature>
<feature type="domain" description="GAT" evidence="5">
    <location>
        <begin position="188"/>
        <end position="315"/>
    </location>
</feature>
<feature type="domain" description="GAE" evidence="3">
    <location>
        <begin position="484"/>
        <end position="605"/>
    </location>
</feature>
<feature type="region of interest" description="Unstructured hinge">
    <location>
        <begin position="316"/>
        <end position="483"/>
    </location>
</feature>
<feature type="region of interest" description="Disordered" evidence="6">
    <location>
        <begin position="389"/>
        <end position="414"/>
    </location>
</feature>
<feature type="region of interest" description="Disordered" evidence="6">
    <location>
        <begin position="435"/>
        <end position="466"/>
    </location>
</feature>
<feature type="compositionally biased region" description="Polar residues" evidence="6">
    <location>
        <begin position="399"/>
        <end position="414"/>
    </location>
</feature>
<feature type="modified residue" description="Phosphoserine" evidence="29">
    <location>
        <position position="400"/>
    </location>
</feature>
<feature type="sequence variant" id="VAR_028275" description="In dbSNP:rs1135045." evidence="7 8 11 24">
    <original>A</original>
    <variation>P</variation>
    <location>
        <position position="424"/>
    </location>
</feature>
<feature type="mutagenesis site" description="Partial loss of clathrin-binding." evidence="10">
    <original>LIDLE</original>
    <variation>AADAA</variation>
    <location>
        <begin position="349"/>
        <end position="353"/>
    </location>
</feature>
<feature type="sequence conflict" description="In Ref. 1; AAF05708." evidence="28" ref="1">
    <original>R</original>
    <variation>W</variation>
    <location>
        <position position="281"/>
    </location>
</feature>
<feature type="helix" evidence="30">
    <location>
        <begin position="26"/>
        <end position="34"/>
    </location>
</feature>
<feature type="helix" evidence="30">
    <location>
        <begin position="43"/>
        <end position="55"/>
    </location>
</feature>
<feature type="helix" evidence="30">
    <location>
        <begin position="58"/>
        <end position="71"/>
    </location>
</feature>
<feature type="helix" evidence="30">
    <location>
        <begin position="76"/>
        <end position="92"/>
    </location>
</feature>
<feature type="helix" evidence="30">
    <location>
        <begin position="95"/>
        <end position="101"/>
    </location>
</feature>
<feature type="helix" evidence="30">
    <location>
        <begin position="104"/>
        <end position="112"/>
    </location>
</feature>
<feature type="helix" evidence="30">
    <location>
        <begin position="125"/>
        <end position="141"/>
    </location>
</feature>
<feature type="helix" evidence="30">
    <location>
        <begin position="146"/>
        <end position="157"/>
    </location>
</feature>
<evidence type="ECO:0000250" key="1"/>
<evidence type="ECO:0000250" key="2">
    <source>
        <dbReference type="UniProtKB" id="Q6P5E6"/>
    </source>
</evidence>
<evidence type="ECO:0000255" key="3">
    <source>
        <dbReference type="PROSITE-ProRule" id="PRU00093"/>
    </source>
</evidence>
<evidence type="ECO:0000255" key="4">
    <source>
        <dbReference type="PROSITE-ProRule" id="PRU00218"/>
    </source>
</evidence>
<evidence type="ECO:0000255" key="5">
    <source>
        <dbReference type="PROSITE-ProRule" id="PRU00373"/>
    </source>
</evidence>
<evidence type="ECO:0000256" key="6">
    <source>
        <dbReference type="SAM" id="MobiDB-lite"/>
    </source>
</evidence>
<evidence type="ECO:0000269" key="7">
    <source>
    </source>
</evidence>
<evidence type="ECO:0000269" key="8">
    <source>
    </source>
</evidence>
<evidence type="ECO:0000269" key="9">
    <source>
    </source>
</evidence>
<evidence type="ECO:0000269" key="10">
    <source>
    </source>
</evidence>
<evidence type="ECO:0000269" key="11">
    <source>
    </source>
</evidence>
<evidence type="ECO:0000269" key="12">
    <source>
    </source>
</evidence>
<evidence type="ECO:0000269" key="13">
    <source>
    </source>
</evidence>
<evidence type="ECO:0000269" key="14">
    <source>
    </source>
</evidence>
<evidence type="ECO:0000269" key="15">
    <source>
    </source>
</evidence>
<evidence type="ECO:0000269" key="16">
    <source>
    </source>
</evidence>
<evidence type="ECO:0000269" key="17">
    <source>
    </source>
</evidence>
<evidence type="ECO:0000269" key="18">
    <source>
    </source>
</evidence>
<evidence type="ECO:0000269" key="19">
    <source>
    </source>
</evidence>
<evidence type="ECO:0000269" key="20">
    <source>
    </source>
</evidence>
<evidence type="ECO:0000269" key="21">
    <source>
    </source>
</evidence>
<evidence type="ECO:0000269" key="22">
    <source>
    </source>
</evidence>
<evidence type="ECO:0000269" key="23">
    <source>
    </source>
</evidence>
<evidence type="ECO:0000269" key="24">
    <source>
    </source>
</evidence>
<evidence type="ECO:0000269" key="25">
    <source>
    </source>
</evidence>
<evidence type="ECO:0000269" key="26">
    <source>
    </source>
</evidence>
<evidence type="ECO:0000269" key="27">
    <source>
    </source>
</evidence>
<evidence type="ECO:0000305" key="28"/>
<evidence type="ECO:0007744" key="29">
    <source>
    </source>
</evidence>
<evidence type="ECO:0007829" key="30">
    <source>
        <dbReference type="PDB" id="1MHQ"/>
    </source>
</evidence>
<dbReference type="EMBL" id="AF190863">
    <property type="protein sequence ID" value="AAF05708.1"/>
    <property type="molecule type" value="mRNA"/>
</dbReference>
<dbReference type="EMBL" id="AF233522">
    <property type="protein sequence ID" value="AAF35394.1"/>
    <property type="molecule type" value="mRNA"/>
</dbReference>
<dbReference type="EMBL" id="AF165531">
    <property type="protein sequence ID" value="AAF42806.1"/>
    <property type="molecule type" value="mRNA"/>
</dbReference>
<dbReference type="EMBL" id="AC002400">
    <property type="protein sequence ID" value="AAC05813.1"/>
    <property type="molecule type" value="Genomic_DNA"/>
</dbReference>
<dbReference type="EMBL" id="CH471145">
    <property type="protein sequence ID" value="EAW55827.1"/>
    <property type="molecule type" value="Genomic_DNA"/>
</dbReference>
<dbReference type="EMBL" id="CH471145">
    <property type="protein sequence ID" value="EAW55828.1"/>
    <property type="molecule type" value="Genomic_DNA"/>
</dbReference>
<dbReference type="EMBL" id="BC000284">
    <property type="protein sequence ID" value="AAH00284.1"/>
    <property type="molecule type" value="mRNA"/>
</dbReference>
<dbReference type="EMBL" id="AF323754">
    <property type="protein sequence ID" value="AAK38634.1"/>
    <property type="status" value="ALT_FRAME"/>
    <property type="molecule type" value="mRNA"/>
</dbReference>
<dbReference type="EMBL" id="AB029003">
    <property type="protein sequence ID" value="BAA83032.1"/>
    <property type="molecule type" value="mRNA"/>
</dbReference>
<dbReference type="CCDS" id="CCDS10611.1"/>
<dbReference type="PIR" id="T00744">
    <property type="entry name" value="T00744"/>
</dbReference>
<dbReference type="RefSeq" id="NP_055859.1">
    <property type="nucleotide sequence ID" value="NM_015044.4"/>
</dbReference>
<dbReference type="PDB" id="1MHQ">
    <property type="method" value="X-ray"/>
    <property type="resolution" value="2.20 A"/>
    <property type="chains" value="A/B=25-172"/>
</dbReference>
<dbReference type="PDBsum" id="1MHQ"/>
<dbReference type="SMR" id="Q9UJY4"/>
<dbReference type="BioGRID" id="116697">
    <property type="interactions" value="95"/>
</dbReference>
<dbReference type="CORUM" id="Q9UJY4"/>
<dbReference type="DIP" id="DIP-31601N"/>
<dbReference type="ELM" id="Q9UJY4"/>
<dbReference type="FunCoup" id="Q9UJY4">
    <property type="interactions" value="1118"/>
</dbReference>
<dbReference type="IntAct" id="Q9UJY4">
    <property type="interactions" value="40"/>
</dbReference>
<dbReference type="MINT" id="Q9UJY4"/>
<dbReference type="STRING" id="9606.ENSP00000311962"/>
<dbReference type="GlyCosmos" id="Q9UJY4">
    <property type="glycosylation" value="1 site, 1 glycan"/>
</dbReference>
<dbReference type="GlyGen" id="Q9UJY4">
    <property type="glycosylation" value="2 sites, 1 O-linked glycan (2 sites)"/>
</dbReference>
<dbReference type="iPTMnet" id="Q9UJY4"/>
<dbReference type="PhosphoSitePlus" id="Q9UJY4"/>
<dbReference type="BioMuta" id="GGA2"/>
<dbReference type="DMDM" id="143811397"/>
<dbReference type="jPOST" id="Q9UJY4"/>
<dbReference type="MassIVE" id="Q9UJY4"/>
<dbReference type="PaxDb" id="9606-ENSP00000311962"/>
<dbReference type="PeptideAtlas" id="Q9UJY4"/>
<dbReference type="ProteomicsDB" id="84691"/>
<dbReference type="Pumba" id="Q9UJY4"/>
<dbReference type="TopDownProteomics" id="Q9UJY4"/>
<dbReference type="Antibodypedia" id="12586">
    <property type="antibodies" value="214 antibodies from 31 providers"/>
</dbReference>
<dbReference type="DNASU" id="23062"/>
<dbReference type="Ensembl" id="ENST00000309859.8">
    <property type="protein sequence ID" value="ENSP00000311962.4"/>
    <property type="gene ID" value="ENSG00000103365.16"/>
</dbReference>
<dbReference type="GeneID" id="23062"/>
<dbReference type="KEGG" id="hsa:23062"/>
<dbReference type="MANE-Select" id="ENST00000309859.8">
    <property type="protein sequence ID" value="ENSP00000311962.4"/>
    <property type="RefSeq nucleotide sequence ID" value="NM_015044.4"/>
    <property type="RefSeq protein sequence ID" value="NP_055859.1"/>
</dbReference>
<dbReference type="UCSC" id="uc002dlq.3">
    <property type="organism name" value="human"/>
</dbReference>
<dbReference type="AGR" id="HGNC:16064"/>
<dbReference type="CTD" id="23062"/>
<dbReference type="DisGeNET" id="23062"/>
<dbReference type="GeneCards" id="GGA2"/>
<dbReference type="HGNC" id="HGNC:16064">
    <property type="gene designation" value="GGA2"/>
</dbReference>
<dbReference type="HPA" id="ENSG00000103365">
    <property type="expression patterns" value="Low tissue specificity"/>
</dbReference>
<dbReference type="MIM" id="606005">
    <property type="type" value="gene"/>
</dbReference>
<dbReference type="neXtProt" id="NX_Q9UJY4"/>
<dbReference type="OpenTargets" id="ENSG00000103365"/>
<dbReference type="PharmGKB" id="PA28658"/>
<dbReference type="VEuPathDB" id="HostDB:ENSG00000103365"/>
<dbReference type="eggNOG" id="KOG1086">
    <property type="taxonomic scope" value="Eukaryota"/>
</dbReference>
<dbReference type="GeneTree" id="ENSGT00940000159613"/>
<dbReference type="HOGENOM" id="CLU_015010_0_0_1"/>
<dbReference type="InParanoid" id="Q9UJY4"/>
<dbReference type="OMA" id="NCCKEKK"/>
<dbReference type="OrthoDB" id="447025at2759"/>
<dbReference type="PAN-GO" id="Q9UJY4">
    <property type="GO annotations" value="4 GO annotations based on evolutionary models"/>
</dbReference>
<dbReference type="PhylomeDB" id="Q9UJY4"/>
<dbReference type="TreeFam" id="TF318574"/>
<dbReference type="PathwayCommons" id="Q9UJY4"/>
<dbReference type="Reactome" id="R-HSA-8854214">
    <property type="pathway name" value="TBC/RABGAPs"/>
</dbReference>
<dbReference type="Reactome" id="R-HSA-977225">
    <property type="pathway name" value="Amyloid fiber formation"/>
</dbReference>
<dbReference type="SignaLink" id="Q9UJY4"/>
<dbReference type="BioGRID-ORCS" id="23062">
    <property type="hits" value="6 hits in 1146 CRISPR screens"/>
</dbReference>
<dbReference type="ChiTaRS" id="GGA2">
    <property type="organism name" value="human"/>
</dbReference>
<dbReference type="EvolutionaryTrace" id="Q9UJY4"/>
<dbReference type="GeneWiki" id="GGA2"/>
<dbReference type="GenomeRNAi" id="23062"/>
<dbReference type="Pharos" id="Q9UJY4">
    <property type="development level" value="Tbio"/>
</dbReference>
<dbReference type="PRO" id="PR:Q9UJY4"/>
<dbReference type="Proteomes" id="UP000005640">
    <property type="component" value="Chromosome 16"/>
</dbReference>
<dbReference type="RNAct" id="Q9UJY4">
    <property type="molecule type" value="protein"/>
</dbReference>
<dbReference type="Bgee" id="ENSG00000103365">
    <property type="expression patterns" value="Expressed in adrenal tissue and 197 other cell types or tissues"/>
</dbReference>
<dbReference type="ExpressionAtlas" id="Q9UJY4">
    <property type="expression patterns" value="baseline and differential"/>
</dbReference>
<dbReference type="GO" id="GO:0030136">
    <property type="term" value="C:clathrin-coated vesicle"/>
    <property type="evidence" value="ECO:0000314"/>
    <property type="project" value="UniProtKB"/>
</dbReference>
<dbReference type="GO" id="GO:0031901">
    <property type="term" value="C:early endosome membrane"/>
    <property type="evidence" value="ECO:0000304"/>
    <property type="project" value="Reactome"/>
</dbReference>
<dbReference type="GO" id="GO:0010008">
    <property type="term" value="C:endosome membrane"/>
    <property type="evidence" value="ECO:0000304"/>
    <property type="project" value="Reactome"/>
</dbReference>
<dbReference type="GO" id="GO:0005794">
    <property type="term" value="C:Golgi apparatus"/>
    <property type="evidence" value="ECO:0000314"/>
    <property type="project" value="HPA"/>
</dbReference>
<dbReference type="GO" id="GO:0005802">
    <property type="term" value="C:trans-Golgi network"/>
    <property type="evidence" value="ECO:0000314"/>
    <property type="project" value="UniProtKB"/>
</dbReference>
<dbReference type="GO" id="GO:0035091">
    <property type="term" value="F:phosphatidylinositol binding"/>
    <property type="evidence" value="ECO:0007669"/>
    <property type="project" value="InterPro"/>
</dbReference>
<dbReference type="GO" id="GO:0031267">
    <property type="term" value="F:small GTPase binding"/>
    <property type="evidence" value="ECO:0000314"/>
    <property type="project" value="UniProtKB"/>
</dbReference>
<dbReference type="GO" id="GO:0043130">
    <property type="term" value="F:ubiquitin binding"/>
    <property type="evidence" value="ECO:0007669"/>
    <property type="project" value="InterPro"/>
</dbReference>
<dbReference type="GO" id="GO:0043001">
    <property type="term" value="P:Golgi to plasma membrane protein transport"/>
    <property type="evidence" value="ECO:0000314"/>
    <property type="project" value="UniProtKB"/>
</dbReference>
<dbReference type="GO" id="GO:0006893">
    <property type="term" value="P:Golgi to plasma membrane transport"/>
    <property type="evidence" value="ECO:0000318"/>
    <property type="project" value="GO_Central"/>
</dbReference>
<dbReference type="GO" id="GO:0006886">
    <property type="term" value="P:intracellular protein transport"/>
    <property type="evidence" value="ECO:0000303"/>
    <property type="project" value="UniProtKB"/>
</dbReference>
<dbReference type="GO" id="GO:0034394">
    <property type="term" value="P:protein localization to cell surface"/>
    <property type="evidence" value="ECO:0000314"/>
    <property type="project" value="UniProtKB"/>
</dbReference>
<dbReference type="CDD" id="cd14239">
    <property type="entry name" value="GAT_GGA1_GGA2"/>
    <property type="match status" value="1"/>
</dbReference>
<dbReference type="CDD" id="cd17010">
    <property type="entry name" value="VHS_GGA2"/>
    <property type="match status" value="1"/>
</dbReference>
<dbReference type="FunFam" id="2.60.40.1230:FF:000001">
    <property type="entry name" value="ADP-ribosylation factor-binding protein GGA1 isoform 1"/>
    <property type="match status" value="1"/>
</dbReference>
<dbReference type="FunFam" id="1.20.5.170:FF:000023">
    <property type="entry name" value="ADP-ribosylation factor-binding protein GGA3 isoform X1"/>
    <property type="match status" value="1"/>
</dbReference>
<dbReference type="FunFam" id="1.25.40.90:FF:000011">
    <property type="entry name" value="ADP-ribosylation factor-binding protein GGA3 isoform X1"/>
    <property type="match status" value="1"/>
</dbReference>
<dbReference type="FunFam" id="1.20.58.160:FF:000002">
    <property type="entry name" value="Golgi-associated, gamma adaptin ear containing, ARF binding protein 2"/>
    <property type="match status" value="1"/>
</dbReference>
<dbReference type="Gene3D" id="1.20.5.170">
    <property type="match status" value="1"/>
</dbReference>
<dbReference type="Gene3D" id="1.20.58.160">
    <property type="match status" value="1"/>
</dbReference>
<dbReference type="Gene3D" id="1.25.40.90">
    <property type="match status" value="1"/>
</dbReference>
<dbReference type="Gene3D" id="2.60.40.1230">
    <property type="match status" value="1"/>
</dbReference>
<dbReference type="InterPro" id="IPR008152">
    <property type="entry name" value="Clathrin_a/b/g-adaptin_app_Ig"/>
</dbReference>
<dbReference type="InterPro" id="IPR013041">
    <property type="entry name" value="Clathrin_app_Ig-like_sf"/>
</dbReference>
<dbReference type="InterPro" id="IPR008942">
    <property type="entry name" value="ENTH_VHS"/>
</dbReference>
<dbReference type="InterPro" id="IPR008153">
    <property type="entry name" value="GAE_dom"/>
</dbReference>
<dbReference type="InterPro" id="IPR004152">
    <property type="entry name" value="GAT_dom"/>
</dbReference>
<dbReference type="InterPro" id="IPR038425">
    <property type="entry name" value="GAT_sf"/>
</dbReference>
<dbReference type="InterPro" id="IPR027422">
    <property type="entry name" value="GGA1-3"/>
</dbReference>
<dbReference type="InterPro" id="IPR041198">
    <property type="entry name" value="GGA_N-GAT"/>
</dbReference>
<dbReference type="InterPro" id="IPR002014">
    <property type="entry name" value="VHS_dom"/>
</dbReference>
<dbReference type="PANTHER" id="PTHR45905:SF2">
    <property type="entry name" value="ADP-RIBOSYLATION FACTOR-BINDING PROTEIN GGA2"/>
    <property type="match status" value="1"/>
</dbReference>
<dbReference type="PANTHER" id="PTHR45905">
    <property type="entry name" value="GOLGI-LOCALIZED, GAMMA-ADAPTIN EAR CONTAINING, ARF BINDING PROTEIN"/>
    <property type="match status" value="1"/>
</dbReference>
<dbReference type="Pfam" id="PF02883">
    <property type="entry name" value="Alpha_adaptinC2"/>
    <property type="match status" value="1"/>
</dbReference>
<dbReference type="Pfam" id="PF03127">
    <property type="entry name" value="GAT"/>
    <property type="match status" value="1"/>
</dbReference>
<dbReference type="Pfam" id="PF18308">
    <property type="entry name" value="GGA_N-GAT"/>
    <property type="match status" value="1"/>
</dbReference>
<dbReference type="Pfam" id="PF00790">
    <property type="entry name" value="VHS"/>
    <property type="match status" value="1"/>
</dbReference>
<dbReference type="SMART" id="SM00809">
    <property type="entry name" value="Alpha_adaptinC2"/>
    <property type="match status" value="1"/>
</dbReference>
<dbReference type="SMART" id="SM00288">
    <property type="entry name" value="VHS"/>
    <property type="match status" value="1"/>
</dbReference>
<dbReference type="SUPFAM" id="SSF49348">
    <property type="entry name" value="Clathrin adaptor appendage domain"/>
    <property type="match status" value="1"/>
</dbReference>
<dbReference type="SUPFAM" id="SSF48464">
    <property type="entry name" value="ENTH/VHS domain"/>
    <property type="match status" value="1"/>
</dbReference>
<dbReference type="SUPFAM" id="SSF89009">
    <property type="entry name" value="GAT-like domain"/>
    <property type="match status" value="1"/>
</dbReference>
<dbReference type="PROSITE" id="PS50180">
    <property type="entry name" value="GAE"/>
    <property type="match status" value="1"/>
</dbReference>
<dbReference type="PROSITE" id="PS50909">
    <property type="entry name" value="GAT"/>
    <property type="match status" value="1"/>
</dbReference>
<dbReference type="PROSITE" id="PS50179">
    <property type="entry name" value="VHS"/>
    <property type="match status" value="1"/>
</dbReference>
<gene>
    <name type="primary">GGA2</name>
    <name type="synonym">KIAA1080</name>
</gene>
<reference key="1">
    <citation type="journal article" date="2000" name="Mol. Biol. Cell">
        <title>A family of ADP-ribosylation factor effectors that can alter transport through the trans-Golgi.</title>
        <authorList>
            <person name="Boman A.L."/>
            <person name="Zhang C.-J."/>
            <person name="Zhu X."/>
            <person name="Kahn R.A."/>
        </authorList>
    </citation>
    <scope>NUCLEOTIDE SEQUENCE [MRNA]</scope>
    <scope>VARIANT PRO-424</scope>
    <scope>SUBCELLULAR LOCATION</scope>
</reference>
<reference key="2">
    <citation type="journal article" date="2000" name="J. Cell Biol.">
        <title>A family of proteins with gamma-adaptin and VHS domains that facilitate trafficking between the trans-Golgi network and the vacuole/lysosome.</title>
        <authorList>
            <person name="Hirst J."/>
            <person name="Lui W.W.Y."/>
            <person name="Bright N.A."/>
            <person name="Totty N."/>
            <person name="Seaman M.N.J."/>
            <person name="Robinson M.S."/>
        </authorList>
    </citation>
    <scope>NUCLEOTIDE SEQUENCE [MRNA]</scope>
    <scope>VARIANT PRO-424</scope>
    <scope>FUNCTION</scope>
    <scope>DOMAIN</scope>
</reference>
<reference key="3">
    <citation type="journal article" date="2000" name="J. Biol. Chem.">
        <title>Vear, a novel Golgi-associated protein with VHS and gamma-adaptin 'ear' domains.</title>
        <authorList>
            <person name="Poussu A."/>
            <person name="Lohi O."/>
            <person name="Lehto V.-P."/>
        </authorList>
    </citation>
    <scope>NUCLEOTIDE SEQUENCE [MRNA]</scope>
</reference>
<reference key="4">
    <citation type="journal article" date="1999" name="Genomics">
        <title>Genome duplications and other features in 12 Mb of DNA sequence from human chromosome 16p and 16q.</title>
        <authorList>
            <person name="Loftus B.J."/>
            <person name="Kim U.-J."/>
            <person name="Sneddon V.P."/>
            <person name="Kalush F."/>
            <person name="Brandon R."/>
            <person name="Fuhrmann J."/>
            <person name="Mason T."/>
            <person name="Crosby M.L."/>
            <person name="Barnstead M."/>
            <person name="Cronin L."/>
            <person name="Mays A.D."/>
            <person name="Cao Y."/>
            <person name="Xu R.X."/>
            <person name="Kang H.-L."/>
            <person name="Mitchell S."/>
            <person name="Eichler E.E."/>
            <person name="Harris P.C."/>
            <person name="Venter J.C."/>
            <person name="Adams M.D."/>
        </authorList>
    </citation>
    <scope>NUCLEOTIDE SEQUENCE [LARGE SCALE GENOMIC DNA]</scope>
</reference>
<reference key="5">
    <citation type="submission" date="2005-09" db="EMBL/GenBank/DDBJ databases">
        <authorList>
            <person name="Mural R.J."/>
            <person name="Istrail S."/>
            <person name="Sutton G.G."/>
            <person name="Florea L."/>
            <person name="Halpern A.L."/>
            <person name="Mobarry C.M."/>
            <person name="Lippert R."/>
            <person name="Walenz B."/>
            <person name="Shatkay H."/>
            <person name="Dew I."/>
            <person name="Miller J.R."/>
            <person name="Flanigan M.J."/>
            <person name="Edwards N.J."/>
            <person name="Bolanos R."/>
            <person name="Fasulo D."/>
            <person name="Halldorsson B.V."/>
            <person name="Hannenhalli S."/>
            <person name="Turner R."/>
            <person name="Yooseph S."/>
            <person name="Lu F."/>
            <person name="Nusskern D.R."/>
            <person name="Shue B.C."/>
            <person name="Zheng X.H."/>
            <person name="Zhong F."/>
            <person name="Delcher A.L."/>
            <person name="Huson D.H."/>
            <person name="Kravitz S.A."/>
            <person name="Mouchard L."/>
            <person name="Reinert K."/>
            <person name="Remington K.A."/>
            <person name="Clark A.G."/>
            <person name="Waterman M.S."/>
            <person name="Eichler E.E."/>
            <person name="Adams M.D."/>
            <person name="Hunkapiller M.W."/>
            <person name="Myers E.W."/>
            <person name="Venter J.C."/>
        </authorList>
    </citation>
    <scope>NUCLEOTIDE SEQUENCE [LARGE SCALE GENOMIC DNA]</scope>
</reference>
<reference key="6">
    <citation type="journal article" date="2004" name="Genome Res.">
        <title>The status, quality, and expansion of the NIH full-length cDNA project: the Mammalian Gene Collection (MGC).</title>
        <authorList>
            <consortium name="The MGC Project Team"/>
        </authorList>
    </citation>
    <scope>NUCLEOTIDE SEQUENCE [LARGE SCALE MRNA]</scope>
    <scope>VARIANT PRO-424</scope>
    <source>
        <tissue>Eye</tissue>
    </source>
</reference>
<reference key="7">
    <citation type="journal article" date="2001" name="EMBO J.">
        <title>The sortilin cytoplasmic tail conveys Golgi-endosome transport and binds the VHS domain of the GGA2 sorting protein.</title>
        <authorList>
            <person name="Nielsen M.S."/>
            <person name="Madsen P."/>
            <person name="Christensen E.I."/>
            <person name="Nykjaer A."/>
            <person name="Gliemann J."/>
            <person name="Kasper D."/>
            <person name="Pohlmann R."/>
            <person name="Petersen C.M."/>
        </authorList>
    </citation>
    <scope>NUCLEOTIDE SEQUENCE [MRNA] OF 1-455</scope>
    <scope>VARIANT PRO-424</scope>
    <scope>INTERACTION WITH SORT1</scope>
    <source>
        <tissue>Mammary gland</tissue>
    </source>
</reference>
<reference key="8">
    <citation type="journal article" date="1999" name="DNA Res.">
        <title>Prediction of the coding sequences of unidentified human genes. XIV. The complete sequences of 100 new cDNA clones from brain which code for large proteins in vitro.</title>
        <authorList>
            <person name="Kikuno R."/>
            <person name="Nagase T."/>
            <person name="Ishikawa K."/>
            <person name="Hirosawa M."/>
            <person name="Miyajima N."/>
            <person name="Tanaka A."/>
            <person name="Kotani H."/>
            <person name="Nomura N."/>
            <person name="Ohara O."/>
        </authorList>
    </citation>
    <scope>NUCLEOTIDE SEQUENCE [LARGE SCALE MRNA] OF 97-613</scope>
    <source>
        <tissue>Brain</tissue>
    </source>
</reference>
<reference key="9">
    <citation type="journal article" date="2000" name="Biochem. Biophys. Res. Commun.">
        <title>Adaptor gamma ear homology domain conserved in gamma-adaptin and GGA proteins that interact with gamma-synergin.</title>
        <authorList>
            <person name="Takatsu H."/>
            <person name="Yoshino K."/>
            <person name="Nakayama K."/>
        </authorList>
    </citation>
    <scope>INTERACTION WITH SYNRG</scope>
</reference>
<reference key="10">
    <citation type="journal article" date="2001" name="Cell">
        <title>The GGAs promote ARF-dependent recruitment of clathrin to the TGN.</title>
        <authorList>
            <person name="Puertollano R."/>
            <person name="Randazzo P.A."/>
            <person name="Presley J.F."/>
            <person name="Hartnell L.M."/>
            <person name="Bonifacino J.S."/>
        </authorList>
    </citation>
    <scope>INTERACTION WITH CLATHRIN</scope>
    <scope>MUTAGENESIS OF 349-LEU--GLU-353</scope>
    <scope>DOMAIN</scope>
</reference>
<reference key="11">
    <citation type="journal article" date="2001" name="J. Biol. Chem.">
        <title>Golgi-localizing, gamma-adaptin ear homology domain, ADP-ribosylation factor-binding (GGA) proteins interact with acidic dileucine sequences within the cytoplasmic domains of sorting receptors through their Vps27p/Hrs/STAM (VHS) domains.</title>
        <authorList>
            <person name="Takatsu H."/>
            <person name="Katoh Y."/>
            <person name="Shiba Y."/>
            <person name="Nakayama K."/>
        </authorList>
    </citation>
    <scope>INTERACTION WITH SORT1; LRP3 AND IGF2R</scope>
</reference>
<reference key="12">
    <citation type="journal article" date="2001" name="Science">
        <title>Sorting of mannose 6-phosphate receptors mediated by the GGAs.</title>
        <authorList>
            <person name="Puertollano R."/>
            <person name="Aguilar R.C."/>
            <person name="Gorshkova I."/>
            <person name="Crouch R.J."/>
            <person name="Bonifacino J.S."/>
        </authorList>
    </citation>
    <scope>INTERACTION WITH IGF2R</scope>
</reference>
<reference key="13">
    <citation type="journal article" date="2002" name="Biochem. J.">
        <title>GGA proteins associate with Golgi membranes through interaction between their GGAH domains and ADP-ribosylation factors.</title>
        <authorList>
            <person name="Takatsu H."/>
            <person name="Yoshino K."/>
            <person name="Toda K."/>
            <person name="Nakayama K."/>
        </authorList>
    </citation>
    <scope>INTERACTION WITH ARF1; ARF5 AND ARF6</scope>
    <scope>SUBCELLULAR LOCATION</scope>
</reference>
<reference key="14">
    <citation type="journal article" date="2002" name="FEBS Lett.">
        <title>The sorLA cytoplasmic domain interacts with GGA1 and -2 and defines minimum requirements for GGA binding.</title>
        <authorList>
            <person name="Jacobsen L."/>
            <person name="Madsen P."/>
            <person name="Nielsen M.S."/>
            <person name="Geraerts W.P.M."/>
            <person name="Gliemann J."/>
            <person name="Smit A.B."/>
            <person name="Petersen C.M."/>
        </authorList>
    </citation>
    <scope>INTERACTION WITH SORL1</scope>
</reference>
<reference key="15">
    <citation type="journal article" date="2002" name="J. Biol. Chem.">
        <title>Interaction of the cation-dependent mannose 6-phosphate receptor with GGA proteins.</title>
        <authorList>
            <person name="Doray B."/>
            <person name="Bruns K."/>
            <person name="Ghosh P."/>
            <person name="Kornfeld S."/>
        </authorList>
    </citation>
    <scope>INTERACTION WITH M6PR AND IGF2R</scope>
</reference>
<reference key="16">
    <citation type="journal article" date="2002" name="Mol. Biol. Cell">
        <title>Clint: a novel clathrin-binding ENTH-domain protein at the Golgi.</title>
        <authorList>
            <person name="Kalthoff C."/>
            <person name="Groos S."/>
            <person name="Kohl R."/>
            <person name="Mahrhold S."/>
            <person name="Ungewickell E.J."/>
        </authorList>
    </citation>
    <scope>INTERACTION WITH EPN4</scope>
</reference>
<reference key="17">
    <citation type="journal article" date="2003" name="Biochemistry">
        <title>Biochemical and structural characterization of the interaction of memapsin 2 (beta-secretase) cytosolic domain with the VHS domain of GGA proteins.</title>
        <authorList>
            <person name="He X."/>
            <person name="Zhu G."/>
            <person name="Koelsch G."/>
            <person name="Rodgers K.K."/>
            <person name="Zhang X.C."/>
            <person name="Tang J."/>
        </authorList>
    </citation>
    <scope>INTERACTION WITH BACE1</scope>
</reference>
<reference key="18">
    <citation type="journal article" date="2003" name="EMBO J.">
        <title>Divalent interaction of the GGAs with the Rabaptin-5-Rabex-5 complex.</title>
        <authorList>
            <person name="Mattera R."/>
            <person name="Arighi C.N."/>
            <person name="Lodge R."/>
            <person name="Zerial M."/>
            <person name="Bonifacino J.S."/>
        </authorList>
    </citation>
    <scope>INTERACTION WITH RABEP1 AND RABGEF1</scope>
</reference>
<reference key="19">
    <citation type="journal article" date="2003" name="Mol. Biol. Cell">
        <title>Binding partners for the COOH-terminal appendage domains of the GGAs and gamma-adaptin.</title>
        <authorList>
            <person name="Lui W.W.Y."/>
            <person name="Collins B.M."/>
            <person name="Hirst J."/>
            <person name="Motley A."/>
            <person name="Millar C."/>
            <person name="Schu P."/>
            <person name="Owen D.J."/>
            <person name="Robinson M.S."/>
        </authorList>
    </citation>
    <scope>INTERACTION WITH CCDC91; P200 AND SYNRG</scope>
</reference>
<reference key="20">
    <citation type="journal article" date="2003" name="J. Cell Biol.">
        <title>Mammalian GGAs act together to sort mannose 6-phosphate receptors.</title>
        <authorList>
            <person name="Ghosh P."/>
            <person name="Griffith J."/>
            <person name="Geuze H.J."/>
            <person name="Kornfeld S."/>
        </authorList>
    </citation>
    <scope>INTERACTION WITH GGA1 AND GGA3</scope>
</reference>
<reference key="21">
    <citation type="journal article" date="2004" name="J. Biol. Chem.">
        <title>Definition of the consensus motif recognized by gamma-adaptin ear domains.</title>
        <authorList>
            <person name="Mattera R."/>
            <person name="Ritter B."/>
            <person name="Sidhu S.S."/>
            <person name="McPherson P.S."/>
            <person name="Bonifacino J.S."/>
        </authorList>
    </citation>
    <scope>INTERACTION WITH NECAP2</scope>
</reference>
<reference key="22">
    <citation type="journal article" date="2004" name="Nat. Cell Biol.">
        <title>Interactions of GGA3 with the ubiquitin sorting machinery.</title>
        <authorList>
            <person name="Puertollano R."/>
            <person name="Bonifacino J.S."/>
        </authorList>
    </citation>
    <scope>SUBCELLULAR LOCATION</scope>
</reference>
<reference key="23">
    <citation type="journal article" date="2005" name="J. Biol. Chem.">
        <title>GGA proteins mediate the recycling pathway of memapsin 2 (BACE).</title>
        <authorList>
            <person name="He X."/>
            <person name="Li F."/>
            <person name="Chang W.P."/>
            <person name="Tang J."/>
        </authorList>
    </citation>
    <scope>FUNCTION</scope>
</reference>
<reference key="24">
    <citation type="journal article" date="2009" name="Sci. Signal.">
        <title>Quantitative phosphoproteomic analysis of T cell receptor signaling reveals system-wide modulation of protein-protein interactions.</title>
        <authorList>
            <person name="Mayya V."/>
            <person name="Lundgren D.H."/>
            <person name="Hwang S.-I."/>
            <person name="Rezaul K."/>
            <person name="Wu L."/>
            <person name="Eng J.K."/>
            <person name="Rodionov V."/>
            <person name="Han D.K."/>
        </authorList>
    </citation>
    <scope>IDENTIFICATION BY MASS SPECTROMETRY [LARGE SCALE ANALYSIS]</scope>
    <source>
        <tissue>Leukemic T-cell</tissue>
    </source>
</reference>
<reference key="25">
    <citation type="journal article" date="2011" name="BMC Syst. Biol.">
        <title>Initial characterization of the human central proteome.</title>
        <authorList>
            <person name="Burkard T.R."/>
            <person name="Planyavsky M."/>
            <person name="Kaupe I."/>
            <person name="Breitwieser F.P."/>
            <person name="Buerckstuemmer T."/>
            <person name="Bennett K.L."/>
            <person name="Superti-Furga G."/>
            <person name="Colinge J."/>
        </authorList>
    </citation>
    <scope>IDENTIFICATION BY MASS SPECTROMETRY [LARGE SCALE ANALYSIS]</scope>
</reference>
<reference key="26">
    <citation type="journal article" date="2013" name="J. Proteome Res.">
        <title>Toward a comprehensive characterization of a human cancer cell phosphoproteome.</title>
        <authorList>
            <person name="Zhou H."/>
            <person name="Di Palma S."/>
            <person name="Preisinger C."/>
            <person name="Peng M."/>
            <person name="Polat A.N."/>
            <person name="Heck A.J."/>
            <person name="Mohammed S."/>
        </authorList>
    </citation>
    <scope>PHOSPHORYLATION [LARGE SCALE ANALYSIS] AT SER-400</scope>
    <scope>IDENTIFICATION BY MASS SPECTROMETRY [LARGE SCALE ANALYSIS]</scope>
    <source>
        <tissue>Cervix carcinoma</tissue>
        <tissue>Erythroleukemia</tissue>
    </source>
</reference>
<reference key="27">
    <citation type="journal article" date="2015" name="Proteomics">
        <title>N-terminome analysis of the human mitochondrial proteome.</title>
        <authorList>
            <person name="Vaca Jacome A.S."/>
            <person name="Rabilloud T."/>
            <person name="Schaeffer-Reiss C."/>
            <person name="Rompais M."/>
            <person name="Ayoub D."/>
            <person name="Lane L."/>
            <person name="Bairoch A."/>
            <person name="Van Dorsselaer A."/>
            <person name="Carapito C."/>
        </authorList>
    </citation>
    <scope>IDENTIFICATION BY MASS SPECTROMETRY [LARGE SCALE ANALYSIS]</scope>
</reference>
<reference key="28">
    <citation type="journal article" date="2016" name="Sci. Rep.">
        <title>Regulation of alpha2B-Adrenergic Receptor Cell Surface Transport by GGA1 and GGA2.</title>
        <authorList>
            <person name="Zhang M."/>
            <person name="Huang W."/>
            <person name="Gao J."/>
            <person name="Terry A.V."/>
            <person name="Wu G."/>
        </authorList>
    </citation>
    <scope>FUNCTION</scope>
    <scope>INTERACTION WITH ADRA2B</scope>
</reference>
<reference key="29">
    <citation type="journal article" date="2017" name="Proc. Natl. Acad. Sci. U.S.A.">
        <title>Conserved role for Gga proteins in phosphatidylinositol 4-kinase localization to the trans-Golgi network.</title>
        <authorList>
            <person name="Daboussi L."/>
            <person name="Costaguta G."/>
            <person name="Ghukasyan R."/>
            <person name="Payne G.S."/>
        </authorList>
    </citation>
    <scope>INTERACTION WITH PI4KB</scope>
    <scope>SUBCELLULAR LOCATION</scope>
</reference>
<reference key="30">
    <citation type="journal article" date="2003" name="FEBS Lett.">
        <title>Crystal structure of GGA2 VHS domain and its implication in plasticity in the ligand binding pocket.</title>
        <authorList>
            <person name="Zhu G."/>
            <person name="He X."/>
            <person name="Zhai P."/>
            <person name="Terzyan S."/>
            <person name="Tang J."/>
            <person name="Zhang X.C."/>
        </authorList>
    </citation>
    <scope>X-RAY CRYSTALLOGRAPHY (2.2 ANGSTROMS) OF 25-167</scope>
</reference>
<organism>
    <name type="scientific">Homo sapiens</name>
    <name type="common">Human</name>
    <dbReference type="NCBI Taxonomy" id="9606"/>
    <lineage>
        <taxon>Eukaryota</taxon>
        <taxon>Metazoa</taxon>
        <taxon>Chordata</taxon>
        <taxon>Craniata</taxon>
        <taxon>Vertebrata</taxon>
        <taxon>Euteleostomi</taxon>
        <taxon>Mammalia</taxon>
        <taxon>Eutheria</taxon>
        <taxon>Euarchontoglires</taxon>
        <taxon>Primates</taxon>
        <taxon>Haplorrhini</taxon>
        <taxon>Catarrhini</taxon>
        <taxon>Hominidae</taxon>
        <taxon>Homo</taxon>
    </lineage>
</organism>
<proteinExistence type="evidence at protein level"/>
<name>GGA2_HUMAN</name>
<accession>Q9UJY4</accession>
<accession>D3DWF0</accession>
<accession>O14564</accession>
<accession>Q9NYN2</accession>
<accession>Q9UPS2</accession>
<keyword id="KW-0002">3D-structure</keyword>
<keyword id="KW-0967">Endosome</keyword>
<keyword id="KW-0333">Golgi apparatus</keyword>
<keyword id="KW-0472">Membrane</keyword>
<keyword id="KW-0597">Phosphoprotein</keyword>
<keyword id="KW-0653">Protein transport</keyword>
<keyword id="KW-1267">Proteomics identification</keyword>
<keyword id="KW-1185">Reference proteome</keyword>
<keyword id="KW-0813">Transport</keyword>
<keyword id="KW-0832">Ubl conjugation</keyword>
<protein>
    <recommendedName>
        <fullName>ADP-ribosylation factor-binding protein GGA2</fullName>
    </recommendedName>
    <alternativeName>
        <fullName>Gamma-adaptin-related protein 2</fullName>
    </alternativeName>
    <alternativeName>
        <fullName>Golgi-localized, gamma ear-containing, ARF-binding protein 2</fullName>
    </alternativeName>
    <alternativeName>
        <fullName>VHS domain and ear domain of gamma-adaptin</fullName>
        <shortName>Vear</shortName>
    </alternativeName>
</protein>
<sequence length="613" mass="67150">MAATAVAAAVAGTESAQGPPGPAASLELWLNKATDPSMSEQDWSAIQNFCEQVNTDPNGPTHAPWLLAHKIQSPQEKEALYALTVLEMCMNHCGEKFHSEVAKFRFLNELIKVLSPKYLGSWATGKVKGRVIEILFSWTVWFPEDIKIRDAYQMLKKQGIIKQDPKLPVDKILPPPSPWPKSSIFDADEEKSKLLTRLLKSNHPEDLQAANRLIKNLVKEEQEKSEKVSKRVSAVEEVRSHVKVLQEMLSMYRRPGQAPPDQEALQVVYERCEKLRPTLFRLASDTTDDDDALAEILQANDLLTQGVLLYKQVMEGRVTFGNRVTSSLGDIPVSRVFQNPAGCMKTCPLIDLEVDNGPAQMGTVVPSLLHQDLAALGISDAPVTGMVSGQNCCEEKRNPSSSTLPGGGVQNPSADRNLLDLLSAQPAPCPLNYVSQKSVPKEVPPGTKSSPGWSWEAGPLAPSPSSQNTPLAQVFVPLESVKPSSLPPLIVYDRNGFRILLHFSQTGAPGHPEVQVLLLTMMSTAPQPVWDIMFQVAVPKSMRVKLQPASSSKLPAFSPLMPPAVISQMLLLDNPHKEPIRLRYKLTFNQGGQPFSEVGEVKDFPDLAVLGAA</sequence>